<reference key="1">
    <citation type="submission" date="2007-12" db="EMBL/GenBank/DDBJ databases">
        <title>Complete sequence of chromosome of Francisella philomiragia subsp. philomiragia ATCC 25017.</title>
        <authorList>
            <consortium name="US DOE Joint Genome Institute"/>
            <person name="Copeland A."/>
            <person name="Lucas S."/>
            <person name="Lapidus A."/>
            <person name="Barry K."/>
            <person name="Detter J.C."/>
            <person name="Glavina del Rio T."/>
            <person name="Hammon N."/>
            <person name="Israni S."/>
            <person name="Dalin E."/>
            <person name="Tice H."/>
            <person name="Pitluck S."/>
            <person name="Chain P."/>
            <person name="Malfatti S."/>
            <person name="Shin M."/>
            <person name="Vergez L."/>
            <person name="Schmutz J."/>
            <person name="Larimer F."/>
            <person name="Land M."/>
            <person name="Hauser L."/>
            <person name="Richardson P."/>
        </authorList>
    </citation>
    <scope>NUCLEOTIDE SEQUENCE [LARGE SCALE GENOMIC DNA]</scope>
    <source>
        <strain>ATCC 25017 / CCUG 19701 / FSC 153 / O#319-036</strain>
    </source>
</reference>
<dbReference type="EMBL" id="CP000937">
    <property type="protein sequence ID" value="ABZ87275.1"/>
    <property type="molecule type" value="Genomic_DNA"/>
</dbReference>
<dbReference type="SMR" id="B0TX17"/>
<dbReference type="KEGG" id="fph:Fphi_1053"/>
<dbReference type="eggNOG" id="COG0806">
    <property type="taxonomic scope" value="Bacteria"/>
</dbReference>
<dbReference type="HOGENOM" id="CLU_077636_3_1_6"/>
<dbReference type="GO" id="GO:0005737">
    <property type="term" value="C:cytoplasm"/>
    <property type="evidence" value="ECO:0007669"/>
    <property type="project" value="UniProtKB-SubCell"/>
</dbReference>
<dbReference type="GO" id="GO:0005840">
    <property type="term" value="C:ribosome"/>
    <property type="evidence" value="ECO:0007669"/>
    <property type="project" value="InterPro"/>
</dbReference>
<dbReference type="GO" id="GO:0043022">
    <property type="term" value="F:ribosome binding"/>
    <property type="evidence" value="ECO:0007669"/>
    <property type="project" value="InterPro"/>
</dbReference>
<dbReference type="GO" id="GO:0042274">
    <property type="term" value="P:ribosomal small subunit biogenesis"/>
    <property type="evidence" value="ECO:0007669"/>
    <property type="project" value="UniProtKB-UniRule"/>
</dbReference>
<dbReference type="GO" id="GO:0006364">
    <property type="term" value="P:rRNA processing"/>
    <property type="evidence" value="ECO:0007669"/>
    <property type="project" value="UniProtKB-UniRule"/>
</dbReference>
<dbReference type="Gene3D" id="2.30.30.240">
    <property type="entry name" value="PRC-barrel domain"/>
    <property type="match status" value="1"/>
</dbReference>
<dbReference type="Gene3D" id="2.40.30.60">
    <property type="entry name" value="RimM"/>
    <property type="match status" value="1"/>
</dbReference>
<dbReference type="HAMAP" id="MF_00014">
    <property type="entry name" value="Ribosome_mat_RimM"/>
    <property type="match status" value="1"/>
</dbReference>
<dbReference type="InterPro" id="IPR011033">
    <property type="entry name" value="PRC_barrel-like_sf"/>
</dbReference>
<dbReference type="InterPro" id="IPR056792">
    <property type="entry name" value="PRC_RimM"/>
</dbReference>
<dbReference type="InterPro" id="IPR011961">
    <property type="entry name" value="RimM"/>
</dbReference>
<dbReference type="InterPro" id="IPR002676">
    <property type="entry name" value="RimM_N"/>
</dbReference>
<dbReference type="InterPro" id="IPR036976">
    <property type="entry name" value="RimM_N_sf"/>
</dbReference>
<dbReference type="InterPro" id="IPR009000">
    <property type="entry name" value="Transl_B-barrel_sf"/>
</dbReference>
<dbReference type="NCBIfam" id="TIGR02273">
    <property type="entry name" value="16S_RimM"/>
    <property type="match status" value="1"/>
</dbReference>
<dbReference type="NCBIfam" id="NF011185">
    <property type="entry name" value="PRK14591.1"/>
    <property type="match status" value="1"/>
</dbReference>
<dbReference type="PANTHER" id="PTHR33692">
    <property type="entry name" value="RIBOSOME MATURATION FACTOR RIMM"/>
    <property type="match status" value="1"/>
</dbReference>
<dbReference type="PANTHER" id="PTHR33692:SF1">
    <property type="entry name" value="RIBOSOME MATURATION FACTOR RIMM"/>
    <property type="match status" value="1"/>
</dbReference>
<dbReference type="Pfam" id="PF24986">
    <property type="entry name" value="PRC_RimM"/>
    <property type="match status" value="1"/>
</dbReference>
<dbReference type="Pfam" id="PF01782">
    <property type="entry name" value="RimM"/>
    <property type="match status" value="1"/>
</dbReference>
<dbReference type="SUPFAM" id="SSF50346">
    <property type="entry name" value="PRC-barrel domain"/>
    <property type="match status" value="1"/>
</dbReference>
<dbReference type="SUPFAM" id="SSF50447">
    <property type="entry name" value="Translation proteins"/>
    <property type="match status" value="1"/>
</dbReference>
<comment type="function">
    <text evidence="1">An accessory protein needed during the final step in the assembly of 30S ribosomal subunit, possibly for assembly of the head region. Essential for efficient processing of 16S rRNA. May be needed both before and after RbfA during the maturation of 16S rRNA. It has affinity for free ribosomal 30S subunits but not for 70S ribosomes.</text>
</comment>
<comment type="subunit">
    <text evidence="1">Binds ribosomal protein uS19.</text>
</comment>
<comment type="subcellular location">
    <subcellularLocation>
        <location evidence="1">Cytoplasm</location>
    </subcellularLocation>
</comment>
<comment type="domain">
    <text evidence="1">The PRC barrel domain binds ribosomal protein uS19.</text>
</comment>
<comment type="similarity">
    <text evidence="1">Belongs to the RimM family.</text>
</comment>
<sequence>MSQDFVEIAKIGATYKLDGELNLYPLASSIETLLSYGDWYIQLPANSAWQPLKDESVLRRADKLYIKLASVNDVETAKKYVNSLIGVPKEALPKVGNDEAYFTDLIGCTIVNTANDSFGKVIGIIETGANEVLVCKKDSDEYLIPYVKQYIVSEDLDLKKIVVDWEYDY</sequence>
<keyword id="KW-0143">Chaperone</keyword>
<keyword id="KW-0963">Cytoplasm</keyword>
<keyword id="KW-0690">Ribosome biogenesis</keyword>
<keyword id="KW-0698">rRNA processing</keyword>
<accession>B0TX17</accession>
<proteinExistence type="inferred from homology"/>
<feature type="chain" id="PRO_1000074029" description="Ribosome maturation factor RimM">
    <location>
        <begin position="1"/>
        <end position="169"/>
    </location>
</feature>
<feature type="domain" description="PRC barrel" evidence="1">
    <location>
        <begin position="97"/>
        <end position="169"/>
    </location>
</feature>
<gene>
    <name evidence="1" type="primary">rimM</name>
    <name type="ordered locus">Fphi_1053</name>
</gene>
<name>RIMM_FRAP2</name>
<protein>
    <recommendedName>
        <fullName evidence="1">Ribosome maturation factor RimM</fullName>
    </recommendedName>
</protein>
<organism>
    <name type="scientific">Francisella philomiragia subsp. philomiragia (strain ATCC 25017 / CCUG 19701 / FSC 153 / O#319-036)</name>
    <dbReference type="NCBI Taxonomy" id="484022"/>
    <lineage>
        <taxon>Bacteria</taxon>
        <taxon>Pseudomonadati</taxon>
        <taxon>Pseudomonadota</taxon>
        <taxon>Gammaproteobacteria</taxon>
        <taxon>Thiotrichales</taxon>
        <taxon>Francisellaceae</taxon>
        <taxon>Francisella</taxon>
    </lineage>
</organism>
<evidence type="ECO:0000255" key="1">
    <source>
        <dbReference type="HAMAP-Rule" id="MF_00014"/>
    </source>
</evidence>